<name>YL016_MIMIV</name>
<accession>Q5UP94</accession>
<proteinExistence type="predicted"/>
<feature type="chain" id="PRO_0000247238" description="Uncharacterized protein L16">
    <location>
        <begin position="1"/>
        <end position="269"/>
    </location>
</feature>
<organismHost>
    <name type="scientific">Acanthamoeba polyphaga</name>
    <name type="common">Amoeba</name>
    <dbReference type="NCBI Taxonomy" id="5757"/>
</organismHost>
<reference key="1">
    <citation type="journal article" date="2004" name="Science">
        <title>The 1.2-megabase genome sequence of Mimivirus.</title>
        <authorList>
            <person name="Raoult D."/>
            <person name="Audic S."/>
            <person name="Robert C."/>
            <person name="Abergel C."/>
            <person name="Renesto P."/>
            <person name="Ogata H."/>
            <person name="La Scola B."/>
            <person name="Susan M."/>
            <person name="Claverie J.-M."/>
        </authorList>
    </citation>
    <scope>NUCLEOTIDE SEQUENCE [LARGE SCALE GENOMIC DNA]</scope>
    <source>
        <strain>Rowbotham-Bradford</strain>
    </source>
</reference>
<dbReference type="EMBL" id="AY653733">
    <property type="protein sequence ID" value="AAV50291.1"/>
    <property type="molecule type" value="Genomic_DNA"/>
</dbReference>
<dbReference type="KEGG" id="vg:9924593"/>
<dbReference type="OrthoDB" id="30304at10239"/>
<dbReference type="Proteomes" id="UP000001134">
    <property type="component" value="Genome"/>
</dbReference>
<dbReference type="Gene3D" id="3.40.50.150">
    <property type="entry name" value="Vaccinia Virus protein VP39"/>
    <property type="match status" value="1"/>
</dbReference>
<dbReference type="InterPro" id="IPR029063">
    <property type="entry name" value="SAM-dependent_MTases_sf"/>
</dbReference>
<dbReference type="SUPFAM" id="SSF53335">
    <property type="entry name" value="S-adenosyl-L-methionine-dependent methyltransferases"/>
    <property type="match status" value="1"/>
</dbReference>
<gene>
    <name type="ordered locus">MIMI_L16</name>
</gene>
<protein>
    <recommendedName>
        <fullName>Uncharacterized protein L16</fullName>
    </recommendedName>
</protein>
<sequence>MQESEIQKPKMQEKFKDHLKKYESDEDYISYINRPLGLFNAYINTYVGPDIKTGLALCHGHNHSIEKFKKIKFINYWYLIDGDAYSFPDYICDLTDIKQLEYFPDDFFDCIMSIYCRVVDTDDNLQYFNILDNVKRILKHDGFFISTELERLFFRFMNDDELIRMNNQLIKLTDEDEIKKYINNFNVKLHFGEDTENITEKQKTFIILNHFEFQKNNTIDIKSIILEKIKLVLKRNGYYFVDLIGEYIFFVPIERVTNKKELLKYTNCD</sequence>
<keyword id="KW-1185">Reference proteome</keyword>
<organism>
    <name type="scientific">Acanthamoeba polyphaga mimivirus</name>
    <name type="common">APMV</name>
    <dbReference type="NCBI Taxonomy" id="212035"/>
    <lineage>
        <taxon>Viruses</taxon>
        <taxon>Varidnaviria</taxon>
        <taxon>Bamfordvirae</taxon>
        <taxon>Nucleocytoviricota</taxon>
        <taxon>Megaviricetes</taxon>
        <taxon>Imitervirales</taxon>
        <taxon>Mimiviridae</taxon>
        <taxon>Megamimivirinae</taxon>
        <taxon>Mimivirus</taxon>
        <taxon>Mimivirus bradfordmassiliense</taxon>
    </lineage>
</organism>